<dbReference type="EMBL" id="AL123456">
    <property type="protein sequence ID" value="CCP46264.1"/>
    <property type="molecule type" value="Genomic_DNA"/>
</dbReference>
<dbReference type="PIR" id="H70976">
    <property type="entry name" value="H70976"/>
</dbReference>
<dbReference type="RefSeq" id="NP_217959.1">
    <property type="nucleotide sequence ID" value="NC_000962.3"/>
</dbReference>
<dbReference type="RefSeq" id="WP_003418308.1">
    <property type="nucleotide sequence ID" value="NZ_KK339370.1"/>
</dbReference>
<dbReference type="PDB" id="5V93">
    <property type="method" value="EM"/>
    <property type="resolution" value="4.00 A"/>
    <property type="chains" value="i=1-151"/>
</dbReference>
<dbReference type="PDB" id="7KGB">
    <property type="method" value="EM"/>
    <property type="resolution" value="2.70 A"/>
    <property type="chains" value="i=1-151"/>
</dbReference>
<dbReference type="PDB" id="7MSC">
    <property type="method" value="EM"/>
    <property type="resolution" value="2.97 A"/>
    <property type="chains" value="i=1-151"/>
</dbReference>
<dbReference type="PDB" id="7MSH">
    <property type="method" value="EM"/>
    <property type="resolution" value="3.23 A"/>
    <property type="chains" value="i=1-151"/>
</dbReference>
<dbReference type="PDB" id="7MSM">
    <property type="method" value="EM"/>
    <property type="resolution" value="2.79 A"/>
    <property type="chains" value="i=1-151"/>
</dbReference>
<dbReference type="PDB" id="7MSZ">
    <property type="method" value="EM"/>
    <property type="resolution" value="3.10 A"/>
    <property type="chains" value="i=1-151"/>
</dbReference>
<dbReference type="PDB" id="7MT2">
    <property type="method" value="EM"/>
    <property type="resolution" value="2.76 A"/>
    <property type="chains" value="i=1-151"/>
</dbReference>
<dbReference type="PDB" id="7MT3">
    <property type="method" value="EM"/>
    <property type="resolution" value="2.80 A"/>
    <property type="chains" value="i=1-151"/>
</dbReference>
<dbReference type="PDB" id="7MT7">
    <property type="method" value="EM"/>
    <property type="resolution" value="2.71 A"/>
    <property type="chains" value="i=1-151"/>
</dbReference>
<dbReference type="PDB" id="7SFR">
    <property type="method" value="EM"/>
    <property type="resolution" value="2.60 A"/>
    <property type="chains" value="i=1-151"/>
</dbReference>
<dbReference type="PDBsum" id="5V93"/>
<dbReference type="PDBsum" id="7KGB"/>
<dbReference type="PDBsum" id="7MSC"/>
<dbReference type="PDBsum" id="7MSH"/>
<dbReference type="PDBsum" id="7MSM"/>
<dbReference type="PDBsum" id="7MSZ"/>
<dbReference type="PDBsum" id="7MT2"/>
<dbReference type="PDBsum" id="7MT3"/>
<dbReference type="PDBsum" id="7MT7"/>
<dbReference type="PDBsum" id="7SFR"/>
<dbReference type="EMDB" id="EMD-22865"/>
<dbReference type="EMDB" id="EMD-23961"/>
<dbReference type="EMDB" id="EMD-23962"/>
<dbReference type="EMDB" id="EMD-23969"/>
<dbReference type="EMDB" id="EMD-23972"/>
<dbReference type="EMDB" id="EMD-23974"/>
<dbReference type="EMDB" id="EMD-23975"/>
<dbReference type="EMDB" id="EMD-23976"/>
<dbReference type="EMDB" id="EMD-8645"/>
<dbReference type="SMR" id="P9WH25"/>
<dbReference type="FunCoup" id="P9WH25">
    <property type="interactions" value="382"/>
</dbReference>
<dbReference type="STRING" id="83332.Rv3442c"/>
<dbReference type="iPTMnet" id="P9WH25"/>
<dbReference type="PaxDb" id="83332-Rv3442c"/>
<dbReference type="GeneID" id="45427432"/>
<dbReference type="GeneID" id="887488"/>
<dbReference type="KEGG" id="mtu:Rv3442c"/>
<dbReference type="KEGG" id="mtv:RVBD_3442c"/>
<dbReference type="TubercuList" id="Rv3442c"/>
<dbReference type="eggNOG" id="COG0103">
    <property type="taxonomic scope" value="Bacteria"/>
</dbReference>
<dbReference type="InParanoid" id="P9WH25"/>
<dbReference type="OrthoDB" id="9803965at2"/>
<dbReference type="PhylomeDB" id="P9WH25"/>
<dbReference type="PRO" id="PR:P9WH25"/>
<dbReference type="Proteomes" id="UP000001584">
    <property type="component" value="Chromosome"/>
</dbReference>
<dbReference type="GO" id="GO:0005737">
    <property type="term" value="C:cytoplasm"/>
    <property type="evidence" value="ECO:0007669"/>
    <property type="project" value="UniProtKB-ARBA"/>
</dbReference>
<dbReference type="GO" id="GO:0005886">
    <property type="term" value="C:plasma membrane"/>
    <property type="evidence" value="ECO:0007005"/>
    <property type="project" value="MTBBASE"/>
</dbReference>
<dbReference type="GO" id="GO:0015935">
    <property type="term" value="C:small ribosomal subunit"/>
    <property type="evidence" value="ECO:0000318"/>
    <property type="project" value="GO_Central"/>
</dbReference>
<dbReference type="GO" id="GO:0003723">
    <property type="term" value="F:RNA binding"/>
    <property type="evidence" value="ECO:0000318"/>
    <property type="project" value="GO_Central"/>
</dbReference>
<dbReference type="GO" id="GO:0003735">
    <property type="term" value="F:structural constituent of ribosome"/>
    <property type="evidence" value="ECO:0000318"/>
    <property type="project" value="GO_Central"/>
</dbReference>
<dbReference type="GO" id="GO:0006412">
    <property type="term" value="P:translation"/>
    <property type="evidence" value="ECO:0007669"/>
    <property type="project" value="UniProtKB-UniRule"/>
</dbReference>
<dbReference type="FunFam" id="3.30.230.10:FF:000001">
    <property type="entry name" value="30S ribosomal protein S9"/>
    <property type="match status" value="1"/>
</dbReference>
<dbReference type="Gene3D" id="3.30.230.10">
    <property type="match status" value="1"/>
</dbReference>
<dbReference type="HAMAP" id="MF_00532_B">
    <property type="entry name" value="Ribosomal_uS9_B"/>
    <property type="match status" value="1"/>
</dbReference>
<dbReference type="InterPro" id="IPR020568">
    <property type="entry name" value="Ribosomal_Su5_D2-typ_SF"/>
</dbReference>
<dbReference type="InterPro" id="IPR000754">
    <property type="entry name" value="Ribosomal_uS9"/>
</dbReference>
<dbReference type="InterPro" id="IPR023035">
    <property type="entry name" value="Ribosomal_uS9_bac/plastid"/>
</dbReference>
<dbReference type="InterPro" id="IPR020574">
    <property type="entry name" value="Ribosomal_uS9_CS"/>
</dbReference>
<dbReference type="InterPro" id="IPR014721">
    <property type="entry name" value="Ribsml_uS5_D2-typ_fold_subgr"/>
</dbReference>
<dbReference type="NCBIfam" id="NF001099">
    <property type="entry name" value="PRK00132.1"/>
    <property type="match status" value="1"/>
</dbReference>
<dbReference type="PANTHER" id="PTHR21569">
    <property type="entry name" value="RIBOSOMAL PROTEIN S9"/>
    <property type="match status" value="1"/>
</dbReference>
<dbReference type="PANTHER" id="PTHR21569:SF1">
    <property type="entry name" value="SMALL RIBOSOMAL SUBUNIT PROTEIN US9M"/>
    <property type="match status" value="1"/>
</dbReference>
<dbReference type="Pfam" id="PF00380">
    <property type="entry name" value="Ribosomal_S9"/>
    <property type="match status" value="1"/>
</dbReference>
<dbReference type="SUPFAM" id="SSF54211">
    <property type="entry name" value="Ribosomal protein S5 domain 2-like"/>
    <property type="match status" value="1"/>
</dbReference>
<dbReference type="PROSITE" id="PS00360">
    <property type="entry name" value="RIBOSOMAL_S9"/>
    <property type="match status" value="1"/>
</dbReference>
<comment type="similarity">
    <text evidence="2">Belongs to the universal ribosomal protein uS9 family.</text>
</comment>
<keyword id="KW-0002">3D-structure</keyword>
<keyword id="KW-0007">Acetylation</keyword>
<keyword id="KW-1185">Reference proteome</keyword>
<keyword id="KW-0687">Ribonucleoprotein</keyword>
<keyword id="KW-0689">Ribosomal protein</keyword>
<evidence type="ECO:0000256" key="1">
    <source>
        <dbReference type="SAM" id="MobiDB-lite"/>
    </source>
</evidence>
<evidence type="ECO:0000305" key="2"/>
<evidence type="ECO:0007744" key="3">
    <source>
    </source>
</evidence>
<feature type="initiator methionine" description="Removed" evidence="3">
    <location>
        <position position="1"/>
    </location>
</feature>
<feature type="chain" id="PRO_0000111379" description="Small ribosomal subunit protein uS9">
    <location>
        <begin position="2"/>
        <end position="151"/>
    </location>
</feature>
<feature type="region of interest" description="Disordered" evidence="1">
    <location>
        <begin position="1"/>
        <end position="20"/>
    </location>
</feature>
<feature type="region of interest" description="Disordered" evidence="1">
    <location>
        <begin position="121"/>
        <end position="151"/>
    </location>
</feature>
<feature type="compositionally biased region" description="Low complexity" evidence="1">
    <location>
        <begin position="1"/>
        <end position="19"/>
    </location>
</feature>
<feature type="compositionally biased region" description="Basic and acidic residues" evidence="1">
    <location>
        <begin position="127"/>
        <end position="136"/>
    </location>
</feature>
<feature type="compositionally biased region" description="Basic residues" evidence="1">
    <location>
        <begin position="137"/>
        <end position="151"/>
    </location>
</feature>
<feature type="modified residue" description="N-acetylthreonine" evidence="3">
    <location>
        <position position="2"/>
    </location>
</feature>
<reference key="1">
    <citation type="journal article" date="1998" name="Nature">
        <title>Deciphering the biology of Mycobacterium tuberculosis from the complete genome sequence.</title>
        <authorList>
            <person name="Cole S.T."/>
            <person name="Brosch R."/>
            <person name="Parkhill J."/>
            <person name="Garnier T."/>
            <person name="Churcher C.M."/>
            <person name="Harris D.E."/>
            <person name="Gordon S.V."/>
            <person name="Eiglmeier K."/>
            <person name="Gas S."/>
            <person name="Barry C.E. III"/>
            <person name="Tekaia F."/>
            <person name="Badcock K."/>
            <person name="Basham D."/>
            <person name="Brown D."/>
            <person name="Chillingworth T."/>
            <person name="Connor R."/>
            <person name="Davies R.M."/>
            <person name="Devlin K."/>
            <person name="Feltwell T."/>
            <person name="Gentles S."/>
            <person name="Hamlin N."/>
            <person name="Holroyd S."/>
            <person name="Hornsby T."/>
            <person name="Jagels K."/>
            <person name="Krogh A."/>
            <person name="McLean J."/>
            <person name="Moule S."/>
            <person name="Murphy L.D."/>
            <person name="Oliver S."/>
            <person name="Osborne J."/>
            <person name="Quail M.A."/>
            <person name="Rajandream M.A."/>
            <person name="Rogers J."/>
            <person name="Rutter S."/>
            <person name="Seeger K."/>
            <person name="Skelton S."/>
            <person name="Squares S."/>
            <person name="Squares R."/>
            <person name="Sulston J.E."/>
            <person name="Taylor K."/>
            <person name="Whitehead S."/>
            <person name="Barrell B.G."/>
        </authorList>
    </citation>
    <scope>NUCLEOTIDE SEQUENCE [LARGE SCALE GENOMIC DNA]</scope>
    <source>
        <strain>ATCC 25618 / H37Rv</strain>
    </source>
</reference>
<reference key="2">
    <citation type="journal article" date="2011" name="Mol. Cell. Proteomics">
        <title>Proteogenomic analysis of Mycobacterium tuberculosis by high resolution mass spectrometry.</title>
        <authorList>
            <person name="Kelkar D.S."/>
            <person name="Kumar D."/>
            <person name="Kumar P."/>
            <person name="Balakrishnan L."/>
            <person name="Muthusamy B."/>
            <person name="Yadav A.K."/>
            <person name="Shrivastava P."/>
            <person name="Marimuthu A."/>
            <person name="Anand S."/>
            <person name="Sundaram H."/>
            <person name="Kingsbury R."/>
            <person name="Harsha H.C."/>
            <person name="Nair B."/>
            <person name="Prasad T.S."/>
            <person name="Chauhan D.S."/>
            <person name="Katoch K."/>
            <person name="Katoch V.M."/>
            <person name="Kumar P."/>
            <person name="Chaerkady R."/>
            <person name="Ramachandran S."/>
            <person name="Dash D."/>
            <person name="Pandey A."/>
        </authorList>
    </citation>
    <scope>ACETYLATION [LARGE SCALE ANALYSIS] AT THR-2</scope>
    <scope>CLEAVAGE OF INITIATOR METHIONINE [LARGE SCALE ANALYSIS]</scope>
    <scope>IDENTIFICATION BY MASS SPECTROMETRY [LARGE SCALE ANALYSIS]</scope>
    <source>
        <strain>ATCC 25618 / H37Rv</strain>
    </source>
</reference>
<gene>
    <name type="primary">rpsI</name>
    <name type="ordered locus">Rv3442c</name>
    <name type="ORF">MTCY77.14c</name>
</gene>
<proteinExistence type="evidence at protein level"/>
<sequence length="151" mass="16436">MTETTPAPQTPAAPAGPAQSFVLERPIQTVGRRKEAVVRVRLVPGTGKFDLNGRSLEDYFPNKVHQQLIKAPLVTVDRVESFDIFAHLGGGGPSGQAGALRLGIARALILVSPEDRPALKKAGFLTRDPRATERKKYGLKKARKAPQYSKR</sequence>
<protein>
    <recommendedName>
        <fullName evidence="2">Small ribosomal subunit protein uS9</fullName>
    </recommendedName>
    <alternativeName>
        <fullName>30S ribosomal protein S9</fullName>
    </alternativeName>
</protein>
<name>RS9_MYCTU</name>
<accession>P9WH25</accession>
<accession>L0TCS1</accession>
<accession>O06259</accession>
<accession>P66639</accession>
<organism>
    <name type="scientific">Mycobacterium tuberculosis (strain ATCC 25618 / H37Rv)</name>
    <dbReference type="NCBI Taxonomy" id="83332"/>
    <lineage>
        <taxon>Bacteria</taxon>
        <taxon>Bacillati</taxon>
        <taxon>Actinomycetota</taxon>
        <taxon>Actinomycetes</taxon>
        <taxon>Mycobacteriales</taxon>
        <taxon>Mycobacteriaceae</taxon>
        <taxon>Mycobacterium</taxon>
        <taxon>Mycobacterium tuberculosis complex</taxon>
    </lineage>
</organism>